<protein>
    <recommendedName>
        <fullName evidence="1">Formate--tetrahydrofolate ligase</fullName>
        <ecNumber evidence="1">6.3.4.3</ecNumber>
    </recommendedName>
    <alternativeName>
        <fullName evidence="1">Formyltetrahydrofolate synthetase</fullName>
        <shortName evidence="1">FHS</shortName>
        <shortName evidence="1">FTHFS</shortName>
    </alternativeName>
</protein>
<keyword id="KW-0067">ATP-binding</keyword>
<keyword id="KW-0436">Ligase</keyword>
<keyword id="KW-0547">Nucleotide-binding</keyword>
<keyword id="KW-0554">One-carbon metabolism</keyword>
<dbReference type="EC" id="6.3.4.3" evidence="1"/>
<dbReference type="EMBL" id="M21507">
    <property type="protein sequence ID" value="AAA53187.1"/>
    <property type="molecule type" value="Genomic_DNA"/>
</dbReference>
<dbReference type="PIR" id="A28185">
    <property type="entry name" value="A28185"/>
</dbReference>
<dbReference type="SMR" id="P13419"/>
<dbReference type="OMA" id="KFWNLKC"/>
<dbReference type="BRENDA" id="6.3.4.3">
    <property type="organism ID" value="1454"/>
</dbReference>
<dbReference type="UniPathway" id="UPA00193"/>
<dbReference type="GO" id="GO:0005524">
    <property type="term" value="F:ATP binding"/>
    <property type="evidence" value="ECO:0007669"/>
    <property type="project" value="UniProtKB-UniRule"/>
</dbReference>
<dbReference type="GO" id="GO:0004329">
    <property type="term" value="F:formate-tetrahydrofolate ligase activity"/>
    <property type="evidence" value="ECO:0007669"/>
    <property type="project" value="UniProtKB-UniRule"/>
</dbReference>
<dbReference type="GO" id="GO:0035999">
    <property type="term" value="P:tetrahydrofolate interconversion"/>
    <property type="evidence" value="ECO:0007669"/>
    <property type="project" value="UniProtKB-UniRule"/>
</dbReference>
<dbReference type="CDD" id="cd00477">
    <property type="entry name" value="FTHFS"/>
    <property type="match status" value="1"/>
</dbReference>
<dbReference type="FunFam" id="3.30.1510.10:FF:000001">
    <property type="entry name" value="Formate--tetrahydrofolate ligase"/>
    <property type="match status" value="1"/>
</dbReference>
<dbReference type="FunFam" id="3.10.410.10:FF:000001">
    <property type="entry name" value="Putative formate--tetrahydrofolate ligase"/>
    <property type="match status" value="1"/>
</dbReference>
<dbReference type="Gene3D" id="3.30.1510.10">
    <property type="entry name" value="Domain 2, N(10)-formyltetrahydrofolate synthetase"/>
    <property type="match status" value="1"/>
</dbReference>
<dbReference type="Gene3D" id="3.10.410.10">
    <property type="entry name" value="Formyltetrahydrofolate synthetase, domain 3"/>
    <property type="match status" value="1"/>
</dbReference>
<dbReference type="Gene3D" id="3.40.50.300">
    <property type="entry name" value="P-loop containing nucleotide triphosphate hydrolases"/>
    <property type="match status" value="1"/>
</dbReference>
<dbReference type="HAMAP" id="MF_01543">
    <property type="entry name" value="FTHFS"/>
    <property type="match status" value="1"/>
</dbReference>
<dbReference type="InterPro" id="IPR000559">
    <property type="entry name" value="Formate_THF_ligase"/>
</dbReference>
<dbReference type="InterPro" id="IPR020628">
    <property type="entry name" value="Formate_THF_ligase_CS"/>
</dbReference>
<dbReference type="InterPro" id="IPR027417">
    <property type="entry name" value="P-loop_NTPase"/>
</dbReference>
<dbReference type="NCBIfam" id="NF010030">
    <property type="entry name" value="PRK13505.1"/>
    <property type="match status" value="1"/>
</dbReference>
<dbReference type="Pfam" id="PF01268">
    <property type="entry name" value="FTHFS"/>
    <property type="match status" value="1"/>
</dbReference>
<dbReference type="SUPFAM" id="SSF52540">
    <property type="entry name" value="P-loop containing nucleoside triphosphate hydrolases"/>
    <property type="match status" value="1"/>
</dbReference>
<dbReference type="PROSITE" id="PS00721">
    <property type="entry name" value="FTHFS_1"/>
    <property type="match status" value="1"/>
</dbReference>
<dbReference type="PROSITE" id="PS00722">
    <property type="entry name" value="FTHFS_2"/>
    <property type="match status" value="1"/>
</dbReference>
<accession>P13419</accession>
<sequence>MKTDIQIAQEAQMKHIKDVAELIDIHEDDLELYGKYKAKVSLDVLDQLKDKPDGKLVLVTAINPTPAGEGKTTTNIGLSMGLNKLGKKTSTALREPSLGPSFGVKGGAAGGGYAQVVPMADINLHFTGDFHAITSAHSLLAALVDNHLHHGNALRIDTNRIVWKRVVDMNDRALRKIVVGLGGKAQGITREDGFDITVASEIMAILCLANDREDLKERLGNMVVAYNVDGDAVRAKDLEAQGALTLILKDAINPNIVQTLENTPAFIHGGPFANIAHGCNSVLATKLALKTGDYAVTEAGFGADLGAEKFFDIKCRYAGLNPDVAVIVATVRALKMHGGVAKEDLGTENLDALAKGMTNLERHIENVAKFGVPSVVAINAFPTDTEAEKQLVFDKCKEMGVDVAISDVFAKGGDGGVELAQKVIDVCENKKSDFKVLYDVEESIPEKITKIAKEIYRADKVNFSKAAKKQIAELEKLGLDKLPICMAKTQYSFSDDPALLGAPEGFELTIRDLELAAGAGFIVALTGDIMRMPGLPKVPAANRMDVLPNGEIIGLF</sequence>
<organism>
    <name type="scientific">Clostridium acidurici</name>
    <name type="common">Gottschalkia acidurici</name>
    <dbReference type="NCBI Taxonomy" id="1556"/>
    <lineage>
        <taxon>Bacteria</taxon>
        <taxon>Bacillati</taxon>
        <taxon>Bacillota</taxon>
        <taxon>Tissierellia</taxon>
        <taxon>Tissierellales</taxon>
        <taxon>Gottschalkiaceae</taxon>
        <taxon>Gottschalkia</taxon>
    </lineage>
</organism>
<reference key="1">
    <citation type="journal article" date="1988" name="J. Bacteriol.">
        <title>Nucleotide sequence of the Clostridium acidiurici ('Clostridium acidi-urici') gene for 10-formyltetrahydrofolate synthetase shows extensive amino acid homology with the trifunctional enzyme C1-tetrahydrofolate synthase from Saccharomyces cerevisiae.</title>
        <authorList>
            <person name="Whitehead T.R."/>
            <person name="Rabinowitz J.C."/>
        </authorList>
    </citation>
    <scope>NUCLEOTIDE SEQUENCE [GENOMIC DNA]</scope>
</reference>
<evidence type="ECO:0000255" key="1">
    <source>
        <dbReference type="HAMAP-Rule" id="MF_01543"/>
    </source>
</evidence>
<gene>
    <name evidence="1" type="primary">fhs</name>
</gene>
<feature type="chain" id="PRO_0000199338" description="Formate--tetrahydrofolate ligase">
    <location>
        <begin position="1"/>
        <end position="556"/>
    </location>
</feature>
<feature type="binding site" evidence="1">
    <location>
        <begin position="65"/>
        <end position="72"/>
    </location>
    <ligand>
        <name>ATP</name>
        <dbReference type="ChEBI" id="CHEBI:30616"/>
    </ligand>
</feature>
<name>FTHS_CLOAC</name>
<proteinExistence type="inferred from homology"/>
<comment type="catalytic activity">
    <reaction evidence="1">
        <text>(6S)-5,6,7,8-tetrahydrofolate + formate + ATP = (6R)-10-formyltetrahydrofolate + ADP + phosphate</text>
        <dbReference type="Rhea" id="RHEA:20221"/>
        <dbReference type="ChEBI" id="CHEBI:15740"/>
        <dbReference type="ChEBI" id="CHEBI:30616"/>
        <dbReference type="ChEBI" id="CHEBI:43474"/>
        <dbReference type="ChEBI" id="CHEBI:57453"/>
        <dbReference type="ChEBI" id="CHEBI:195366"/>
        <dbReference type="ChEBI" id="CHEBI:456216"/>
        <dbReference type="EC" id="6.3.4.3"/>
    </reaction>
</comment>
<comment type="pathway">
    <text evidence="1">One-carbon metabolism; tetrahydrofolate interconversion.</text>
</comment>
<comment type="similarity">
    <text evidence="1">Belongs to the formate--tetrahydrofolate ligase family.</text>
</comment>